<name>NANH_VIBC3</name>
<dbReference type="EC" id="3.2.1.18"/>
<dbReference type="EMBL" id="M83562">
    <property type="protein sequence ID" value="AAA27546.1"/>
    <property type="molecule type" value="Genomic_DNA"/>
</dbReference>
<dbReference type="EMBL" id="CP000627">
    <property type="protein sequence ID" value="ABQ19703.1"/>
    <property type="status" value="ALT_INIT"/>
    <property type="molecule type" value="Genomic_DNA"/>
</dbReference>
<dbReference type="EMBL" id="CP001235">
    <property type="protein sequence ID" value="ACP09894.1"/>
    <property type="status" value="ALT_INIT"/>
    <property type="molecule type" value="Genomic_DNA"/>
</dbReference>
<dbReference type="EMBL" id="M19268">
    <property type="protein sequence ID" value="AAA27547.1"/>
    <property type="molecule type" value="Genomic_DNA"/>
</dbReference>
<dbReference type="PIR" id="A27734">
    <property type="entry name" value="A27734"/>
</dbReference>
<dbReference type="PIR" id="A43866">
    <property type="entry name" value="A43866"/>
</dbReference>
<dbReference type="RefSeq" id="WP_001211290.1">
    <property type="nucleotide sequence ID" value="NZ_JAACZH010000016.1"/>
</dbReference>
<dbReference type="SMR" id="A5F7A4"/>
<dbReference type="CAZy" id="CBM40">
    <property type="family name" value="Carbohydrate-Binding Module Family 40"/>
</dbReference>
<dbReference type="CAZy" id="GH33">
    <property type="family name" value="Glycoside Hydrolase Family 33"/>
</dbReference>
<dbReference type="KEGG" id="vco:VC0395_A1381"/>
<dbReference type="KEGG" id="vcr:VC395_1898"/>
<dbReference type="PATRIC" id="fig|345073.21.peg.1838"/>
<dbReference type="eggNOG" id="COG4409">
    <property type="taxonomic scope" value="Bacteria"/>
</dbReference>
<dbReference type="HOGENOM" id="CLU_376807_0_0_6"/>
<dbReference type="Proteomes" id="UP000000249">
    <property type="component" value="Chromosome 2"/>
</dbReference>
<dbReference type="GO" id="GO:0005737">
    <property type="term" value="C:cytoplasm"/>
    <property type="evidence" value="ECO:0007669"/>
    <property type="project" value="TreeGrafter"/>
</dbReference>
<dbReference type="GO" id="GO:0005576">
    <property type="term" value="C:extracellular region"/>
    <property type="evidence" value="ECO:0007669"/>
    <property type="project" value="UniProtKB-SubCell"/>
</dbReference>
<dbReference type="GO" id="GO:0043231">
    <property type="term" value="C:intracellular membrane-bounded organelle"/>
    <property type="evidence" value="ECO:0007669"/>
    <property type="project" value="TreeGrafter"/>
</dbReference>
<dbReference type="GO" id="GO:0016020">
    <property type="term" value="C:membrane"/>
    <property type="evidence" value="ECO:0007669"/>
    <property type="project" value="TreeGrafter"/>
</dbReference>
<dbReference type="GO" id="GO:0004308">
    <property type="term" value="F:exo-alpha-sialidase activity"/>
    <property type="evidence" value="ECO:0007669"/>
    <property type="project" value="UniProtKB-EC"/>
</dbReference>
<dbReference type="GO" id="GO:0033691">
    <property type="term" value="F:sialic acid binding"/>
    <property type="evidence" value="ECO:0007669"/>
    <property type="project" value="InterPro"/>
</dbReference>
<dbReference type="GO" id="GO:0006689">
    <property type="term" value="P:ganglioside catabolic process"/>
    <property type="evidence" value="ECO:0007669"/>
    <property type="project" value="TreeGrafter"/>
</dbReference>
<dbReference type="GO" id="GO:0009313">
    <property type="term" value="P:oligosaccharide catabolic process"/>
    <property type="evidence" value="ECO:0007669"/>
    <property type="project" value="TreeGrafter"/>
</dbReference>
<dbReference type="CDD" id="cd15482">
    <property type="entry name" value="Sialidase_non-viral"/>
    <property type="match status" value="1"/>
</dbReference>
<dbReference type="FunFam" id="2.60.120.200:FF:000298">
    <property type="entry name" value="Sialidase"/>
    <property type="match status" value="1"/>
</dbReference>
<dbReference type="Gene3D" id="2.120.10.10">
    <property type="match status" value="1"/>
</dbReference>
<dbReference type="Gene3D" id="2.60.120.200">
    <property type="match status" value="2"/>
</dbReference>
<dbReference type="InterPro" id="IPR013320">
    <property type="entry name" value="ConA-like_dom_sf"/>
</dbReference>
<dbReference type="InterPro" id="IPR011040">
    <property type="entry name" value="Sialidase"/>
</dbReference>
<dbReference type="InterPro" id="IPR026856">
    <property type="entry name" value="Sialidase_fam"/>
</dbReference>
<dbReference type="InterPro" id="IPR036278">
    <property type="entry name" value="Sialidase_sf"/>
</dbReference>
<dbReference type="InterPro" id="IPR015344">
    <property type="entry name" value="VCNA_lectin-like_dom"/>
</dbReference>
<dbReference type="PANTHER" id="PTHR10628:SF30">
    <property type="entry name" value="EXO-ALPHA-SIALIDASE"/>
    <property type="match status" value="1"/>
</dbReference>
<dbReference type="PANTHER" id="PTHR10628">
    <property type="entry name" value="SIALIDASE"/>
    <property type="match status" value="1"/>
</dbReference>
<dbReference type="Pfam" id="PF13088">
    <property type="entry name" value="BNR_2"/>
    <property type="match status" value="1"/>
</dbReference>
<dbReference type="Pfam" id="PF09264">
    <property type="entry name" value="Sial-lect-inser"/>
    <property type="match status" value="2"/>
</dbReference>
<dbReference type="SUPFAM" id="SSF49899">
    <property type="entry name" value="Concanavalin A-like lectins/glucanases"/>
    <property type="match status" value="2"/>
</dbReference>
<dbReference type="SUPFAM" id="SSF50939">
    <property type="entry name" value="Sialidases"/>
    <property type="match status" value="1"/>
</dbReference>
<proteinExistence type="evidence at protein level"/>
<protein>
    <recommendedName>
        <fullName>Sialidase</fullName>
        <ecNumber>3.2.1.18</ecNumber>
    </recommendedName>
    <alternativeName>
        <fullName>Neuraminidase</fullName>
        <shortName>NANase</shortName>
    </alternativeName>
</protein>
<comment type="function">
    <text>Cleaves the terminal sialic acid (N-acetyl neuraminic acid) from carbohydrate chains in glycoproteins providing free sialic acid which can be used as carbon and energy sources. Sialidases have been suggested to be pathogenic factors in microbial infections. Facilitates cholera toxin binding to host intestinal epithelial cells by converting cell surface polysialogangliosides to GM1 monogangliosides.</text>
</comment>
<comment type="catalytic activity">
    <reaction>
        <text>Hydrolysis of alpha-(2-&gt;3)-, alpha-(2-&gt;6)-, alpha-(2-&gt;8)- glycosidic linkages of terminal sialic acid residues in oligosaccharides, glycoproteins, glycolipids, colominic acid and synthetic substrates.</text>
        <dbReference type="EC" id="3.2.1.18"/>
    </reaction>
</comment>
<comment type="cofactor">
    <cofactor evidence="1">
        <name>Ca(2+)</name>
        <dbReference type="ChEBI" id="CHEBI:29108"/>
    </cofactor>
</comment>
<comment type="subunit">
    <text evidence="1">Monomer.</text>
</comment>
<comment type="subcellular location">
    <subcellularLocation>
        <location>Secreted</location>
    </subcellularLocation>
</comment>
<comment type="induction">
    <text>May be controlled by sialic acid availability and a growth-phase-dependent mechanism.</text>
</comment>
<comment type="similarity">
    <text evidence="4">Belongs to the glycosyl hydrolase 33 family.</text>
</comment>
<comment type="sequence caution" evidence="4">
    <conflict type="erroneous initiation">
        <sequence resource="EMBL-CDS" id="ABQ19703"/>
    </conflict>
</comment>
<comment type="sequence caution" evidence="4">
    <conflict type="erroneous initiation">
        <sequence resource="EMBL-CDS" id="ACP09894"/>
    </conflict>
</comment>
<accession>A5F7A4</accession>
<accession>C3M1H8</accession>
<accession>P37060</accession>
<accession>Q9KR59</accession>
<sequence length="781" mass="85609">MRFKNVKKTALMLAMFGMATSSNAALFDYNATGDTEFDSPAKQGWMQDNTNNGSGVLTNADGMPAWLVQGIGGRAQWTYSLSTNQHAQASSFGWRMTTEMKVLSGGMITNYYANGTQRVLPIISLDSSGNLVVEFEGQTGRTVLATGTAATEYHKFELVFLPGSNPSASFYFDGKLIRDNIQPTASKQNMIVWGNGSSNTDGVAAYRDIKFEIQGDVIFRGPDRIPSIVASSVTPGVVTAFAEKRVGGGDPGALSNTNDIITRTSRDGGITWDTELNLTEQINVSDEFDFSDPRPIYDPSSNTVLVSYARWPTDAAQNGDRIKPWMPNGIFYSVYDVASGNWQAPIDVTDQVKERSFQIAGWGGSELYRRNTSLNSQQDWQSNAKIRIVDGAANQIQVADGSRKYVVTLSIDESGGLVANLNGVSAPIILQSEHAKVHSFHDYELQYSALNHTTTLFVDGQQITTWAGEVSQENNIQFGNADAQIDGRLHVQKIVLTQQGHNLVEFDAFYLAQQTPEVEKDLEKLGWTKIKTGNTMSLYGNASVNPGPGHGITLTRQQNISGSQNGRLIYPAIVLDRFFLNVMSIYSDDGGSNWQTGSTLPIPFRWKSSSILETLEPSEADMVELQNGDLLLTARLDFNQIVNGVNYSPRQQFLSKDGGITWSLLEANNANVFSNISTGTVDASITRFEQSDGSHFLLFTNPQGNPAGTNGRQNLGLWFSFDEGVTWKGPIQLVNGASAYSDIYQLDSENAIVIVETDNSNMRILRMPITLLKQKLTLSQN</sequence>
<organism>
    <name type="scientific">Vibrio cholerae serotype O1 (strain ATCC 39541 / Classical Ogawa 395 / O395)</name>
    <dbReference type="NCBI Taxonomy" id="345073"/>
    <lineage>
        <taxon>Bacteria</taxon>
        <taxon>Pseudomonadati</taxon>
        <taxon>Pseudomonadota</taxon>
        <taxon>Gammaproteobacteria</taxon>
        <taxon>Vibrionales</taxon>
        <taxon>Vibrionaceae</taxon>
        <taxon>Vibrio</taxon>
    </lineage>
</organism>
<gene>
    <name type="primary">nanH</name>
    <name type="ordered locus">VC0395_A1381</name>
    <name type="ordered locus">VC395_1898</name>
</gene>
<evidence type="ECO:0000250" key="1"/>
<evidence type="ECO:0000255" key="2"/>
<evidence type="ECO:0000269" key="3">
    <source>
    </source>
</evidence>
<evidence type="ECO:0000305" key="4"/>
<keyword id="KW-0106">Calcium</keyword>
<keyword id="KW-0903">Direct protein sequencing</keyword>
<keyword id="KW-0326">Glycosidase</keyword>
<keyword id="KW-0378">Hydrolase</keyword>
<keyword id="KW-0677">Repeat</keyword>
<keyword id="KW-0964">Secreted</keyword>
<keyword id="KW-0732">Signal</keyword>
<feature type="signal peptide" evidence="3">
    <location>
        <begin position="1"/>
        <end position="24"/>
    </location>
</feature>
<feature type="chain" id="PRO_0000323013" description="Sialidase">
    <location>
        <begin position="25"/>
        <end position="781"/>
    </location>
</feature>
<feature type="repeat" description="BNR 1">
    <location>
        <begin position="263"/>
        <end position="274"/>
    </location>
</feature>
<feature type="repeat" description="BNR 2">
    <location>
        <begin position="585"/>
        <end position="596"/>
    </location>
</feature>
<feature type="repeat" description="BNR 3">
    <location>
        <begin position="653"/>
        <end position="664"/>
    </location>
</feature>
<feature type="repeat" description="BNR 4">
    <location>
        <begin position="718"/>
        <end position="729"/>
    </location>
</feature>
<feature type="active site" description="Proton acceptor" evidence="1">
    <location>
        <position position="250"/>
    </location>
</feature>
<feature type="active site" evidence="2">
    <location>
        <position position="619"/>
    </location>
</feature>
<feature type="active site" description="Nucleophile" evidence="1">
    <location>
        <position position="740"/>
    </location>
</feature>
<feature type="binding site" evidence="1">
    <location>
        <position position="224"/>
    </location>
    <ligand>
        <name>substrate</name>
    </ligand>
</feature>
<feature type="binding site" evidence="1">
    <location>
        <position position="635"/>
    </location>
    <ligand>
        <name>substrate</name>
    </ligand>
</feature>
<feature type="binding site" evidence="1">
    <location>
        <position position="712"/>
    </location>
    <ligand>
        <name>substrate</name>
    </ligand>
</feature>
<feature type="sequence conflict" description="In Ref. 4; AAA27547." evidence="4" ref="4">
    <original>S</original>
    <variation>L</variation>
    <location>
        <position position="22"/>
    </location>
</feature>
<reference key="1">
    <citation type="journal article" date="1992" name="Infect. Immun.">
        <title>Role of Vibrio cholerae neuraminidase in the function of cholera toxin.</title>
        <authorList>
            <person name="Galen J.E."/>
            <person name="Ketley J.M."/>
            <person name="Fasano A."/>
            <person name="Richardson S.H."/>
            <person name="Wasserman S.S."/>
            <person name="Kaper J.B."/>
        </authorList>
    </citation>
    <scope>NUCLEOTIDE SEQUENCE [GENOMIC DNA]</scope>
</reference>
<reference key="2">
    <citation type="submission" date="2007-03" db="EMBL/GenBank/DDBJ databases">
        <authorList>
            <person name="Heidelberg J."/>
        </authorList>
    </citation>
    <scope>NUCLEOTIDE SEQUENCE [LARGE SCALE GENOMIC DNA]</scope>
    <source>
        <strain>ATCC 39541 / Classical Ogawa 395 / O395</strain>
    </source>
</reference>
<reference key="3">
    <citation type="journal article" date="2008" name="PLoS ONE">
        <title>A recalibrated molecular clock and independent origins for the cholera pandemic clones.</title>
        <authorList>
            <person name="Feng L."/>
            <person name="Reeves P.R."/>
            <person name="Lan R."/>
            <person name="Ren Y."/>
            <person name="Gao C."/>
            <person name="Zhou Z."/>
            <person name="Ren Y."/>
            <person name="Cheng J."/>
            <person name="Wang W."/>
            <person name="Wang J."/>
            <person name="Qian W."/>
            <person name="Li D."/>
            <person name="Wang L."/>
        </authorList>
    </citation>
    <scope>NUCLEOTIDE SEQUENCE [LARGE SCALE GENOMIC DNA]</scope>
    <source>
        <strain>ATCC 39541 / Classical Ogawa 395 / O395</strain>
    </source>
</reference>
<reference key="4">
    <citation type="journal article" date="1988" name="J. Bacteriol.">
        <title>Cloning and expression of the Vibrio cholerae neuraminidase gene nanH in Escherichia coli.</title>
        <authorList>
            <person name="Vimr E.R."/>
            <person name="Lawrisuk L."/>
            <person name="Galen J.E."/>
            <person name="Kaper J.B."/>
        </authorList>
    </citation>
    <scope>NUCLEOTIDE SEQUENCE [GENOMIC DNA] OF 1-44</scope>
    <scope>PROTEIN SEQUENCE OF 25-44</scope>
</reference>